<proteinExistence type="inferred from homology"/>
<sequence length="166" mass="19681">MQNYFQLLGLPQEYNINLKILEKQYFAMQVKYHPDKAKTLQEKEQNLITAAELNNAYSTLKDALKRAEYMLLLQKINLNDEKTRSLLSPLELSIFWDEMEIIENTILFSDLEKIKDKYELMKKLEIDSLKQAFEEQNLSDATIKTSKLKYIRTLLHKLQEKIKSCK</sequence>
<keyword id="KW-0143">Chaperone</keyword>
<gene>
    <name evidence="1" type="primary">hscB</name>
    <name type="ordered locus">RMA_0271</name>
</gene>
<accession>A8F0V7</accession>
<evidence type="ECO:0000255" key="1">
    <source>
        <dbReference type="HAMAP-Rule" id="MF_00682"/>
    </source>
</evidence>
<comment type="function">
    <text evidence="1">Co-chaperone involved in the maturation of iron-sulfur cluster-containing proteins. Seems to help targeting proteins to be folded toward HscA.</text>
</comment>
<comment type="subunit">
    <text evidence="1">Interacts with HscA and stimulates its ATPase activity.</text>
</comment>
<comment type="similarity">
    <text evidence="1">Belongs to the HscB family.</text>
</comment>
<protein>
    <recommendedName>
        <fullName evidence="1">Co-chaperone protein HscB homolog</fullName>
    </recommendedName>
</protein>
<feature type="chain" id="PRO_1000083027" description="Co-chaperone protein HscB homolog">
    <location>
        <begin position="1"/>
        <end position="166"/>
    </location>
</feature>
<feature type="domain" description="J" evidence="1">
    <location>
        <begin position="3"/>
        <end position="73"/>
    </location>
</feature>
<reference key="1">
    <citation type="journal article" date="2007" name="Genome Res.">
        <title>Lateral gene transfer between obligate intracellular bacteria: evidence from the Rickettsia massiliae genome.</title>
        <authorList>
            <person name="Blanc G."/>
            <person name="Ogata H."/>
            <person name="Robert C."/>
            <person name="Audic S."/>
            <person name="Claverie J.-M."/>
            <person name="Raoult D."/>
        </authorList>
    </citation>
    <scope>NUCLEOTIDE SEQUENCE [LARGE SCALE GENOMIC DNA]</scope>
    <source>
        <strain>Mtu5</strain>
    </source>
</reference>
<dbReference type="EMBL" id="CP000683">
    <property type="protein sequence ID" value="ABV84543.1"/>
    <property type="molecule type" value="Genomic_DNA"/>
</dbReference>
<dbReference type="RefSeq" id="WP_012152520.1">
    <property type="nucleotide sequence ID" value="NC_009900.1"/>
</dbReference>
<dbReference type="SMR" id="A8F0V7"/>
<dbReference type="KEGG" id="rms:RMA_0271"/>
<dbReference type="HOGENOM" id="CLU_068529_2_0_5"/>
<dbReference type="Proteomes" id="UP000001311">
    <property type="component" value="Chromosome"/>
</dbReference>
<dbReference type="GO" id="GO:0001671">
    <property type="term" value="F:ATPase activator activity"/>
    <property type="evidence" value="ECO:0007669"/>
    <property type="project" value="InterPro"/>
</dbReference>
<dbReference type="GO" id="GO:0051087">
    <property type="term" value="F:protein-folding chaperone binding"/>
    <property type="evidence" value="ECO:0007669"/>
    <property type="project" value="InterPro"/>
</dbReference>
<dbReference type="GO" id="GO:0044571">
    <property type="term" value="P:[2Fe-2S] cluster assembly"/>
    <property type="evidence" value="ECO:0007669"/>
    <property type="project" value="InterPro"/>
</dbReference>
<dbReference type="GO" id="GO:0051259">
    <property type="term" value="P:protein complex oligomerization"/>
    <property type="evidence" value="ECO:0007669"/>
    <property type="project" value="InterPro"/>
</dbReference>
<dbReference type="GO" id="GO:0006457">
    <property type="term" value="P:protein folding"/>
    <property type="evidence" value="ECO:0007669"/>
    <property type="project" value="UniProtKB-UniRule"/>
</dbReference>
<dbReference type="CDD" id="cd06257">
    <property type="entry name" value="DnaJ"/>
    <property type="match status" value="1"/>
</dbReference>
<dbReference type="Gene3D" id="1.10.287.110">
    <property type="entry name" value="DnaJ domain"/>
    <property type="match status" value="1"/>
</dbReference>
<dbReference type="HAMAP" id="MF_00682">
    <property type="entry name" value="HscB"/>
    <property type="match status" value="1"/>
</dbReference>
<dbReference type="InterPro" id="IPR001623">
    <property type="entry name" value="DnaJ_domain"/>
</dbReference>
<dbReference type="InterPro" id="IPR004640">
    <property type="entry name" value="HscB"/>
</dbReference>
<dbReference type="InterPro" id="IPR036386">
    <property type="entry name" value="HscB_C_sf"/>
</dbReference>
<dbReference type="InterPro" id="IPR009073">
    <property type="entry name" value="HscB_oligo_C"/>
</dbReference>
<dbReference type="InterPro" id="IPR036869">
    <property type="entry name" value="J_dom_sf"/>
</dbReference>
<dbReference type="NCBIfam" id="TIGR00714">
    <property type="entry name" value="hscB"/>
    <property type="match status" value="1"/>
</dbReference>
<dbReference type="PANTHER" id="PTHR14021">
    <property type="entry name" value="IRON-SULFUR CLUSTER CO-CHAPERONE PROTEIN HSCB"/>
    <property type="match status" value="1"/>
</dbReference>
<dbReference type="PANTHER" id="PTHR14021:SF15">
    <property type="entry name" value="IRON-SULFUR CLUSTER CO-CHAPERONE PROTEIN HSCB"/>
    <property type="match status" value="1"/>
</dbReference>
<dbReference type="Pfam" id="PF00226">
    <property type="entry name" value="DnaJ"/>
    <property type="match status" value="1"/>
</dbReference>
<dbReference type="Pfam" id="PF07743">
    <property type="entry name" value="HSCB_C"/>
    <property type="match status" value="1"/>
</dbReference>
<dbReference type="SMART" id="SM00271">
    <property type="entry name" value="DnaJ"/>
    <property type="match status" value="1"/>
</dbReference>
<dbReference type="SUPFAM" id="SSF46565">
    <property type="entry name" value="Chaperone J-domain"/>
    <property type="match status" value="1"/>
</dbReference>
<dbReference type="SUPFAM" id="SSF47144">
    <property type="entry name" value="HSC20 (HSCB), C-terminal oligomerisation domain"/>
    <property type="match status" value="1"/>
</dbReference>
<dbReference type="PROSITE" id="PS50076">
    <property type="entry name" value="DNAJ_2"/>
    <property type="match status" value="1"/>
</dbReference>
<organism>
    <name type="scientific">Rickettsia massiliae (strain Mtu5)</name>
    <dbReference type="NCBI Taxonomy" id="416276"/>
    <lineage>
        <taxon>Bacteria</taxon>
        <taxon>Pseudomonadati</taxon>
        <taxon>Pseudomonadota</taxon>
        <taxon>Alphaproteobacteria</taxon>
        <taxon>Rickettsiales</taxon>
        <taxon>Rickettsiaceae</taxon>
        <taxon>Rickettsieae</taxon>
        <taxon>Rickettsia</taxon>
        <taxon>spotted fever group</taxon>
    </lineage>
</organism>
<name>HSCB_RICM5</name>